<sequence>MTKTIFESKTEGNWFLGSFQAFNYFTCFGNDESYEAIQDVFHRLLSTLKVEGLQLHVVQMTSDFQLLAFLVDMINQEYSRHIKVTQHKGAILVSEDDQLFLVHLPKEGTSLEKFFDLKNDNNFGDTILIATHNEGKTKEFRELFGKLGLKVENLNDYPDLPEVEETGMTFEENARLKAETISKLTGKMVISDDSGLKVDALGGLPGVWSARFSGPDATDARNNAKLLHELAMVFDKERRSAQFHTTLVVSAPNKESLVVEAEWPGYIGTEPKGENGFGYDPLFIVGEGSRTAAELSAQEKNNLSHRGQAVRKLMEVFPKWQLEN</sequence>
<comment type="function">
    <text evidence="1">Pyrophosphatase that catalyzes the hydrolysis of nucleoside triphosphates to their monophosphate derivatives, with a high preference for the non-canonical purine nucleotides XTP (xanthosine triphosphate), dITP (deoxyinosine triphosphate) and ITP. Seems to function as a house-cleaning enzyme that removes non-canonical purine nucleotides from the nucleotide pool, thus preventing their incorporation into DNA/RNA and avoiding chromosomal lesions.</text>
</comment>
<comment type="catalytic activity">
    <reaction evidence="1">
        <text>XTP + H2O = XMP + diphosphate + H(+)</text>
        <dbReference type="Rhea" id="RHEA:28610"/>
        <dbReference type="ChEBI" id="CHEBI:15377"/>
        <dbReference type="ChEBI" id="CHEBI:15378"/>
        <dbReference type="ChEBI" id="CHEBI:33019"/>
        <dbReference type="ChEBI" id="CHEBI:57464"/>
        <dbReference type="ChEBI" id="CHEBI:61314"/>
        <dbReference type="EC" id="3.6.1.66"/>
    </reaction>
</comment>
<comment type="catalytic activity">
    <reaction evidence="1">
        <text>dITP + H2O = dIMP + diphosphate + H(+)</text>
        <dbReference type="Rhea" id="RHEA:28342"/>
        <dbReference type="ChEBI" id="CHEBI:15377"/>
        <dbReference type="ChEBI" id="CHEBI:15378"/>
        <dbReference type="ChEBI" id="CHEBI:33019"/>
        <dbReference type="ChEBI" id="CHEBI:61194"/>
        <dbReference type="ChEBI" id="CHEBI:61382"/>
        <dbReference type="EC" id="3.6.1.66"/>
    </reaction>
</comment>
<comment type="catalytic activity">
    <reaction evidence="1">
        <text>ITP + H2O = IMP + diphosphate + H(+)</text>
        <dbReference type="Rhea" id="RHEA:29399"/>
        <dbReference type="ChEBI" id="CHEBI:15377"/>
        <dbReference type="ChEBI" id="CHEBI:15378"/>
        <dbReference type="ChEBI" id="CHEBI:33019"/>
        <dbReference type="ChEBI" id="CHEBI:58053"/>
        <dbReference type="ChEBI" id="CHEBI:61402"/>
        <dbReference type="EC" id="3.6.1.66"/>
    </reaction>
</comment>
<comment type="cofactor">
    <cofactor evidence="1">
        <name>Mg(2+)</name>
        <dbReference type="ChEBI" id="CHEBI:18420"/>
    </cofactor>
    <text evidence="1">Binds 1 Mg(2+) ion per subunit.</text>
</comment>
<comment type="subunit">
    <text evidence="1">Homodimer.</text>
</comment>
<comment type="similarity">
    <text evidence="1 2">Belongs to the HAM1 NTPase family.</text>
</comment>
<protein>
    <recommendedName>
        <fullName evidence="1">dITP/XTP pyrophosphatase</fullName>
        <ecNumber evidence="1">3.6.1.66</ecNumber>
    </recommendedName>
    <alternativeName>
        <fullName evidence="1">Non-canonical purine NTP pyrophosphatase</fullName>
    </alternativeName>
    <alternativeName>
        <fullName evidence="1">Non-standard purine NTP pyrophosphatase</fullName>
    </alternativeName>
    <alternativeName>
        <fullName evidence="1">Nucleoside-triphosphate diphosphatase</fullName>
    </alternativeName>
    <alternativeName>
        <fullName evidence="1">Nucleoside-triphosphate pyrophosphatase</fullName>
        <shortName evidence="1">NTPase</shortName>
    </alternativeName>
</protein>
<accession>Q8DY93</accession>
<dbReference type="EC" id="3.6.1.66" evidence="1"/>
<dbReference type="EMBL" id="AE009948">
    <property type="protein sequence ID" value="AAN00463.1"/>
    <property type="molecule type" value="Genomic_DNA"/>
</dbReference>
<dbReference type="RefSeq" id="NP_688590.1">
    <property type="nucleotide sequence ID" value="NC_004116.1"/>
</dbReference>
<dbReference type="RefSeq" id="WP_000167813.1">
    <property type="nucleotide sequence ID" value="NC_004116.1"/>
</dbReference>
<dbReference type="SMR" id="Q8DY93"/>
<dbReference type="STRING" id="208435.SAG1599"/>
<dbReference type="KEGG" id="sag:SAG1599"/>
<dbReference type="PATRIC" id="fig|208435.3.peg.1609"/>
<dbReference type="HOGENOM" id="CLU_863088_0_0_9"/>
<dbReference type="OrthoDB" id="9807456at2"/>
<dbReference type="Proteomes" id="UP000000821">
    <property type="component" value="Chromosome"/>
</dbReference>
<dbReference type="GO" id="GO:0005829">
    <property type="term" value="C:cytosol"/>
    <property type="evidence" value="ECO:0007669"/>
    <property type="project" value="TreeGrafter"/>
</dbReference>
<dbReference type="GO" id="GO:0035870">
    <property type="term" value="F:dITP diphosphatase activity"/>
    <property type="evidence" value="ECO:0007669"/>
    <property type="project" value="RHEA"/>
</dbReference>
<dbReference type="GO" id="GO:0036220">
    <property type="term" value="F:ITP diphosphatase activity"/>
    <property type="evidence" value="ECO:0007669"/>
    <property type="project" value="UniProtKB-EC"/>
</dbReference>
<dbReference type="GO" id="GO:0046872">
    <property type="term" value="F:metal ion binding"/>
    <property type="evidence" value="ECO:0007669"/>
    <property type="project" value="UniProtKB-KW"/>
</dbReference>
<dbReference type="GO" id="GO:0000166">
    <property type="term" value="F:nucleotide binding"/>
    <property type="evidence" value="ECO:0007669"/>
    <property type="project" value="UniProtKB-KW"/>
</dbReference>
<dbReference type="GO" id="GO:0017111">
    <property type="term" value="F:ribonucleoside triphosphate phosphatase activity"/>
    <property type="evidence" value="ECO:0007669"/>
    <property type="project" value="InterPro"/>
</dbReference>
<dbReference type="GO" id="GO:0036222">
    <property type="term" value="F:XTP diphosphatase activity"/>
    <property type="evidence" value="ECO:0007669"/>
    <property type="project" value="RHEA"/>
</dbReference>
<dbReference type="GO" id="GO:0009117">
    <property type="term" value="P:nucleotide metabolic process"/>
    <property type="evidence" value="ECO:0007669"/>
    <property type="project" value="UniProtKB-KW"/>
</dbReference>
<dbReference type="GO" id="GO:0009146">
    <property type="term" value="P:purine nucleoside triphosphate catabolic process"/>
    <property type="evidence" value="ECO:0007669"/>
    <property type="project" value="UniProtKB-UniRule"/>
</dbReference>
<dbReference type="CDD" id="cd00515">
    <property type="entry name" value="HAM1"/>
    <property type="match status" value="1"/>
</dbReference>
<dbReference type="FunFam" id="3.90.950.10:FF:000001">
    <property type="entry name" value="dITP/XTP pyrophosphatase"/>
    <property type="match status" value="1"/>
</dbReference>
<dbReference type="Gene3D" id="3.90.950.10">
    <property type="match status" value="1"/>
</dbReference>
<dbReference type="HAMAP" id="MF_01405">
    <property type="entry name" value="Non_canon_purine_NTPase"/>
    <property type="match status" value="1"/>
</dbReference>
<dbReference type="InterPro" id="IPR020922">
    <property type="entry name" value="dITP/XTP_pyrophosphatase"/>
</dbReference>
<dbReference type="InterPro" id="IPR029001">
    <property type="entry name" value="ITPase-like_fam"/>
</dbReference>
<dbReference type="InterPro" id="IPR002637">
    <property type="entry name" value="RdgB/HAM1"/>
</dbReference>
<dbReference type="NCBIfam" id="NF002698">
    <property type="entry name" value="PRK02491.1"/>
    <property type="match status" value="1"/>
</dbReference>
<dbReference type="NCBIfam" id="NF011397">
    <property type="entry name" value="PRK14822.1"/>
    <property type="match status" value="1"/>
</dbReference>
<dbReference type="NCBIfam" id="TIGR00042">
    <property type="entry name" value="RdgB/HAM1 family non-canonical purine NTP pyrophosphatase"/>
    <property type="match status" value="1"/>
</dbReference>
<dbReference type="PANTHER" id="PTHR11067:SF9">
    <property type="entry name" value="INOSINE TRIPHOSPHATE PYROPHOSPHATASE"/>
    <property type="match status" value="1"/>
</dbReference>
<dbReference type="PANTHER" id="PTHR11067">
    <property type="entry name" value="INOSINE TRIPHOSPHATE PYROPHOSPHATASE/HAM1 PROTEIN"/>
    <property type="match status" value="1"/>
</dbReference>
<dbReference type="Pfam" id="PF01725">
    <property type="entry name" value="Ham1p_like"/>
    <property type="match status" value="1"/>
</dbReference>
<dbReference type="SUPFAM" id="SSF52972">
    <property type="entry name" value="ITPase-like"/>
    <property type="match status" value="1"/>
</dbReference>
<organism>
    <name type="scientific">Streptococcus agalactiae serotype V (strain ATCC BAA-611 / 2603 V/R)</name>
    <dbReference type="NCBI Taxonomy" id="208435"/>
    <lineage>
        <taxon>Bacteria</taxon>
        <taxon>Bacillati</taxon>
        <taxon>Bacillota</taxon>
        <taxon>Bacilli</taxon>
        <taxon>Lactobacillales</taxon>
        <taxon>Streptococcaceae</taxon>
        <taxon>Streptococcus</taxon>
    </lineage>
</organism>
<keyword id="KW-0378">Hydrolase</keyword>
<keyword id="KW-0460">Magnesium</keyword>
<keyword id="KW-0479">Metal-binding</keyword>
<keyword id="KW-0546">Nucleotide metabolism</keyword>
<keyword id="KW-0547">Nucleotide-binding</keyword>
<keyword id="KW-1185">Reference proteome</keyword>
<evidence type="ECO:0000255" key="1">
    <source>
        <dbReference type="HAMAP-Rule" id="MF_01405"/>
    </source>
</evidence>
<evidence type="ECO:0000305" key="2"/>
<proteinExistence type="inferred from homology"/>
<gene>
    <name type="ordered locus">SAG1599</name>
</gene>
<feature type="chain" id="PRO_0000178236" description="dITP/XTP pyrophosphatase">
    <location>
        <begin position="1"/>
        <end position="324"/>
    </location>
</feature>
<feature type="region of interest" description="Unknown">
    <location>
        <begin position="1"/>
        <end position="127"/>
    </location>
</feature>
<feature type="region of interest" description="NTP pyrophosphatase">
    <location>
        <begin position="128"/>
        <end position="324"/>
    </location>
</feature>
<feature type="active site" description="Proton acceptor" evidence="1">
    <location>
        <position position="193"/>
    </location>
</feature>
<feature type="binding site" evidence="1">
    <location>
        <begin position="131"/>
        <end position="136"/>
    </location>
    <ligand>
        <name>substrate</name>
    </ligand>
</feature>
<feature type="binding site" evidence="1">
    <location>
        <position position="164"/>
    </location>
    <ligand>
        <name>Mg(2+)</name>
        <dbReference type="ChEBI" id="CHEBI:18420"/>
    </ligand>
</feature>
<feature type="binding site" evidence="1">
    <location>
        <position position="193"/>
    </location>
    <ligand>
        <name>Mg(2+)</name>
        <dbReference type="ChEBI" id="CHEBI:18420"/>
    </ligand>
</feature>
<feature type="binding site" evidence="1">
    <location>
        <position position="194"/>
    </location>
    <ligand>
        <name>substrate</name>
    </ligand>
</feature>
<feature type="binding site" evidence="1">
    <location>
        <begin position="277"/>
        <end position="280"/>
    </location>
    <ligand>
        <name>substrate</name>
    </ligand>
</feature>
<feature type="binding site" evidence="1">
    <location>
        <position position="300"/>
    </location>
    <ligand>
        <name>substrate</name>
    </ligand>
</feature>
<feature type="binding site" evidence="1">
    <location>
        <begin position="305"/>
        <end position="306"/>
    </location>
    <ligand>
        <name>substrate</name>
    </ligand>
</feature>
<reference key="1">
    <citation type="journal article" date="2002" name="Proc. Natl. Acad. Sci. U.S.A.">
        <title>Complete genome sequence and comparative genomic analysis of an emerging human pathogen, serotype V Streptococcus agalactiae.</title>
        <authorList>
            <person name="Tettelin H."/>
            <person name="Masignani V."/>
            <person name="Cieslewicz M.J."/>
            <person name="Eisen J.A."/>
            <person name="Peterson S.N."/>
            <person name="Wessels M.R."/>
            <person name="Paulsen I.T."/>
            <person name="Nelson K.E."/>
            <person name="Margarit I."/>
            <person name="Read T.D."/>
            <person name="Madoff L.C."/>
            <person name="Wolf A.M."/>
            <person name="Beanan M.J."/>
            <person name="Brinkac L.M."/>
            <person name="Daugherty S.C."/>
            <person name="DeBoy R.T."/>
            <person name="Durkin A.S."/>
            <person name="Kolonay J.F."/>
            <person name="Madupu R."/>
            <person name="Lewis M.R."/>
            <person name="Radune D."/>
            <person name="Fedorova N.B."/>
            <person name="Scanlan D."/>
            <person name="Khouri H.M."/>
            <person name="Mulligan S."/>
            <person name="Carty H.A."/>
            <person name="Cline R.T."/>
            <person name="Van Aken S.E."/>
            <person name="Gill J."/>
            <person name="Scarselli M."/>
            <person name="Mora M."/>
            <person name="Iacobini E.T."/>
            <person name="Brettoni C."/>
            <person name="Galli G."/>
            <person name="Mariani M."/>
            <person name="Vegni F."/>
            <person name="Maione D."/>
            <person name="Rinaudo D."/>
            <person name="Rappuoli R."/>
            <person name="Telford J.L."/>
            <person name="Kasper D.L."/>
            <person name="Grandi G."/>
            <person name="Fraser C.M."/>
        </authorList>
    </citation>
    <scope>NUCLEOTIDE SEQUENCE [LARGE SCALE GENOMIC DNA]</scope>
    <source>
        <strain>ATCC BAA-611 / 2603 V/R</strain>
    </source>
</reference>
<name>IXTPA_STRA5</name>